<proteinExistence type="uncertain"/>
<protein>
    <recommendedName>
        <fullName>Putative uncharacterized protein C6orf50</fullName>
    </recommendedName>
    <alternativeName>
        <fullName>Nasopharyngeal carcinoma-associated gene 19 protein</fullName>
    </alternativeName>
</protein>
<reference key="1">
    <citation type="submission" date="1999-12" db="EMBL/GenBank/DDBJ databases">
        <title>Analysis of novel genes on 7q32-ter.</title>
        <authorList>
            <person name="Zhang X.H."/>
            <person name="Bin L.-H."/>
            <person name="Yang J.B."/>
            <person name="Li G.Y."/>
        </authorList>
    </citation>
    <scope>NUCLEOTIDE SEQUENCE [MRNA]</scope>
    <source>
        <tissue>Fetal brain</tissue>
    </source>
</reference>
<reference key="2">
    <citation type="journal article" date="2003" name="Nature">
        <title>The DNA sequence and analysis of human chromosome 6.</title>
        <authorList>
            <person name="Mungall A.J."/>
            <person name="Palmer S.A."/>
            <person name="Sims S.K."/>
            <person name="Edwards C.A."/>
            <person name="Ashurst J.L."/>
            <person name="Wilming L."/>
            <person name="Jones M.C."/>
            <person name="Horton R."/>
            <person name="Hunt S.E."/>
            <person name="Scott C.E."/>
            <person name="Gilbert J.G.R."/>
            <person name="Clamp M.E."/>
            <person name="Bethel G."/>
            <person name="Milne S."/>
            <person name="Ainscough R."/>
            <person name="Almeida J.P."/>
            <person name="Ambrose K.D."/>
            <person name="Andrews T.D."/>
            <person name="Ashwell R.I.S."/>
            <person name="Babbage A.K."/>
            <person name="Bagguley C.L."/>
            <person name="Bailey J."/>
            <person name="Banerjee R."/>
            <person name="Barker D.J."/>
            <person name="Barlow K.F."/>
            <person name="Bates K."/>
            <person name="Beare D.M."/>
            <person name="Beasley H."/>
            <person name="Beasley O."/>
            <person name="Bird C.P."/>
            <person name="Blakey S.E."/>
            <person name="Bray-Allen S."/>
            <person name="Brook J."/>
            <person name="Brown A.J."/>
            <person name="Brown J.Y."/>
            <person name="Burford D.C."/>
            <person name="Burrill W."/>
            <person name="Burton J."/>
            <person name="Carder C."/>
            <person name="Carter N.P."/>
            <person name="Chapman J.C."/>
            <person name="Clark S.Y."/>
            <person name="Clark G."/>
            <person name="Clee C.M."/>
            <person name="Clegg S."/>
            <person name="Cobley V."/>
            <person name="Collier R.E."/>
            <person name="Collins J.E."/>
            <person name="Colman L.K."/>
            <person name="Corby N.R."/>
            <person name="Coville G.J."/>
            <person name="Culley K.M."/>
            <person name="Dhami P."/>
            <person name="Davies J."/>
            <person name="Dunn M."/>
            <person name="Earthrowl M.E."/>
            <person name="Ellington A.E."/>
            <person name="Evans K.A."/>
            <person name="Faulkner L."/>
            <person name="Francis M.D."/>
            <person name="Frankish A."/>
            <person name="Frankland J."/>
            <person name="French L."/>
            <person name="Garner P."/>
            <person name="Garnett J."/>
            <person name="Ghori M.J."/>
            <person name="Gilby L.M."/>
            <person name="Gillson C.J."/>
            <person name="Glithero R.J."/>
            <person name="Grafham D.V."/>
            <person name="Grant M."/>
            <person name="Gribble S."/>
            <person name="Griffiths C."/>
            <person name="Griffiths M.N.D."/>
            <person name="Hall R."/>
            <person name="Halls K.S."/>
            <person name="Hammond S."/>
            <person name="Harley J.L."/>
            <person name="Hart E.A."/>
            <person name="Heath P.D."/>
            <person name="Heathcott R."/>
            <person name="Holmes S.J."/>
            <person name="Howden P.J."/>
            <person name="Howe K.L."/>
            <person name="Howell G.R."/>
            <person name="Huckle E."/>
            <person name="Humphray S.J."/>
            <person name="Humphries M.D."/>
            <person name="Hunt A.R."/>
            <person name="Johnson C.M."/>
            <person name="Joy A.A."/>
            <person name="Kay M."/>
            <person name="Keenan S.J."/>
            <person name="Kimberley A.M."/>
            <person name="King A."/>
            <person name="Laird G.K."/>
            <person name="Langford C."/>
            <person name="Lawlor S."/>
            <person name="Leongamornlert D.A."/>
            <person name="Leversha M."/>
            <person name="Lloyd C.R."/>
            <person name="Lloyd D.M."/>
            <person name="Loveland J.E."/>
            <person name="Lovell J."/>
            <person name="Martin S."/>
            <person name="Mashreghi-Mohammadi M."/>
            <person name="Maslen G.L."/>
            <person name="Matthews L."/>
            <person name="McCann O.T."/>
            <person name="McLaren S.J."/>
            <person name="McLay K."/>
            <person name="McMurray A."/>
            <person name="Moore M.J.F."/>
            <person name="Mullikin J.C."/>
            <person name="Niblett D."/>
            <person name="Nickerson T."/>
            <person name="Novik K.L."/>
            <person name="Oliver K."/>
            <person name="Overton-Larty E.K."/>
            <person name="Parker A."/>
            <person name="Patel R."/>
            <person name="Pearce A.V."/>
            <person name="Peck A.I."/>
            <person name="Phillimore B.J.C.T."/>
            <person name="Phillips S."/>
            <person name="Plumb R.W."/>
            <person name="Porter K.M."/>
            <person name="Ramsey Y."/>
            <person name="Ranby S.A."/>
            <person name="Rice C.M."/>
            <person name="Ross M.T."/>
            <person name="Searle S.M."/>
            <person name="Sehra H.K."/>
            <person name="Sheridan E."/>
            <person name="Skuce C.D."/>
            <person name="Smith S."/>
            <person name="Smith M."/>
            <person name="Spraggon L."/>
            <person name="Squares S.L."/>
            <person name="Steward C.A."/>
            <person name="Sycamore N."/>
            <person name="Tamlyn-Hall G."/>
            <person name="Tester J."/>
            <person name="Theaker A.J."/>
            <person name="Thomas D.W."/>
            <person name="Thorpe A."/>
            <person name="Tracey A."/>
            <person name="Tromans A."/>
            <person name="Tubby B."/>
            <person name="Wall M."/>
            <person name="Wallis J.M."/>
            <person name="West A.P."/>
            <person name="White S.S."/>
            <person name="Whitehead S.L."/>
            <person name="Whittaker H."/>
            <person name="Wild A."/>
            <person name="Willey D.J."/>
            <person name="Wilmer T.E."/>
            <person name="Wood J.M."/>
            <person name="Wray P.W."/>
            <person name="Wyatt J.C."/>
            <person name="Young L."/>
            <person name="Younger R.M."/>
            <person name="Bentley D.R."/>
            <person name="Coulson A."/>
            <person name="Durbin R.M."/>
            <person name="Hubbard T."/>
            <person name="Sulston J.E."/>
            <person name="Dunham I."/>
            <person name="Rogers J."/>
            <person name="Beck S."/>
        </authorList>
    </citation>
    <scope>NUCLEOTIDE SEQUENCE [LARGE SCALE GENOMIC DNA]</scope>
</reference>
<feature type="chain" id="PRO_0000254056" description="Putative uncharacterized protein C6orf50">
    <location>
        <begin position="1"/>
        <end position="102"/>
    </location>
</feature>
<feature type="transmembrane region" description="Helical" evidence="1">
    <location>
        <begin position="36"/>
        <end position="55"/>
    </location>
</feature>
<name>CF050_HUMAN</name>
<organism>
    <name type="scientific">Homo sapiens</name>
    <name type="common">Human</name>
    <dbReference type="NCBI Taxonomy" id="9606"/>
    <lineage>
        <taxon>Eukaryota</taxon>
        <taxon>Metazoa</taxon>
        <taxon>Chordata</taxon>
        <taxon>Craniata</taxon>
        <taxon>Vertebrata</taxon>
        <taxon>Euteleostomi</taxon>
        <taxon>Mammalia</taxon>
        <taxon>Eutheria</taxon>
        <taxon>Euarchontoglires</taxon>
        <taxon>Primates</taxon>
        <taxon>Haplorrhini</taxon>
        <taxon>Catarrhini</taxon>
        <taxon>Hominidae</taxon>
        <taxon>Homo</taxon>
    </lineage>
</organism>
<comment type="subcellular location">
    <subcellularLocation>
        <location evidence="2">Membrane</location>
        <topology evidence="2">Single-pass membrane protein</topology>
    </subcellularLocation>
</comment>
<comment type="caution">
    <text evidence="2">Product of a dubious CDS prediction.</text>
</comment>
<comment type="caution">
    <text evidence="2">Received originally the C6orf50 official gene symbol but the corresponding HGNC record was withdrawn.</text>
</comment>
<dbReference type="EMBL" id="AF210650">
    <property type="protein sequence ID" value="AAF99586.1"/>
    <property type="molecule type" value="mRNA"/>
</dbReference>
<dbReference type="EMBL" id="AL138831">
    <property type="status" value="NOT_ANNOTATED_CDS"/>
    <property type="molecule type" value="Genomic_DNA"/>
</dbReference>
<dbReference type="SMR" id="Q9HD87"/>
<dbReference type="BioMuta" id="NAG19"/>
<dbReference type="DMDM" id="74752819"/>
<dbReference type="ProteomicsDB" id="81841"/>
<dbReference type="neXtProt" id="NX_Q9HD87"/>
<dbReference type="InParanoid" id="Q9HD87"/>
<dbReference type="PAN-GO" id="Q9HD87">
    <property type="GO annotations" value="0 GO annotations based on evolutionary models"/>
</dbReference>
<dbReference type="PhylomeDB" id="Q9HD87"/>
<dbReference type="Pharos" id="Q9HD87">
    <property type="development level" value="Tdark"/>
</dbReference>
<dbReference type="Proteomes" id="UP000005640">
    <property type="component" value="Unplaced"/>
</dbReference>
<dbReference type="RNAct" id="Q9HD87">
    <property type="molecule type" value="protein"/>
</dbReference>
<dbReference type="GO" id="GO:0016020">
    <property type="term" value="C:membrane"/>
    <property type="evidence" value="ECO:0007669"/>
    <property type="project" value="UniProtKB-SubCell"/>
</dbReference>
<evidence type="ECO:0000255" key="1"/>
<evidence type="ECO:0000305" key="2"/>
<accession>Q9HD87</accession>
<sequence>MANTQLDHLHYTTEFTRNDLLIICKKFNLMLMDEDIISLLAIFIKMCLWLWKQFLKRGSKCSETSELLEKVKLQLAFTAYKYVDICFPEQMAYSRYIRWYIH</sequence>
<gene>
    <name type="primary">C6orf50</name>
    <name type="ORF">NAG19</name>
</gene>
<keyword id="KW-0472">Membrane</keyword>
<keyword id="KW-1185">Reference proteome</keyword>
<keyword id="KW-0812">Transmembrane</keyword>
<keyword id="KW-1133">Transmembrane helix</keyword>